<accession>Q8X583</accession>
<name>YCGV_ECO57</name>
<sequence>MGIKQHNGNTKADRLAELKIRSPSIQLIKFGAIGLNAILFSPLLIAADTGSQYGTNITINDGDRITGDTADPSGNLYGVMTPAGNTPGNINLGNDVTVNVNDASGYAKGIIIQGKNSSLTANRLTVDVVGQTSAIGINLIGDYTHADLGTGSTIKSNDDGIIIGHSSTLTATQFTIENSNGIGLTINDYGTSVDLGSGSKIKTDGSTGVYIGGLNGNNANGAARFTATDLTIDVQGYSAMGINVQKNSVVDLGTNSSIKTSGDNAHGLWSFGQVSANALTVDVTGAAANGVEVRGGTTTIGADSHISSAQGGGLVTSGSDATINFSGTAAQRNSIFSGGSYGASAQTATAVINMQNTDITVDRNGSLALGLWALSGGRITGDSLAITGAAGARGIYAMTNSQIDLTSDLVIDMSTPDQMAIATQHDDGYAASRINASGRMLINGSVLSKGGLINLDMHPGSVWTGSSLSDNVNGGKLDVAMNNSVWNVTSNSNLDTLALSHSTVDFASHGSTAGTFTTLNVENLSGNSTFIMRADVVGEGNGVKPWA</sequence>
<protein>
    <recommendedName>
        <fullName>Putative uncharacterized protein YcgV</fullName>
    </recommendedName>
</protein>
<proteinExistence type="uncertain"/>
<feature type="chain" id="PRO_0000204730" description="Putative uncharacterized protein YcgV">
    <location>
        <begin position="1"/>
        <end position="547"/>
    </location>
</feature>
<reference key="1">
    <citation type="journal article" date="2001" name="Nature">
        <title>Genome sequence of enterohaemorrhagic Escherichia coli O157:H7.</title>
        <authorList>
            <person name="Perna N.T."/>
            <person name="Plunkett G. III"/>
            <person name="Burland V."/>
            <person name="Mau B."/>
            <person name="Glasner J.D."/>
            <person name="Rose D.J."/>
            <person name="Mayhew G.F."/>
            <person name="Evans P.S."/>
            <person name="Gregor J."/>
            <person name="Kirkpatrick H.A."/>
            <person name="Posfai G."/>
            <person name="Hackett J."/>
            <person name="Klink S."/>
            <person name="Boutin A."/>
            <person name="Shao Y."/>
            <person name="Miller L."/>
            <person name="Grotbeck E.J."/>
            <person name="Davis N.W."/>
            <person name="Lim A."/>
            <person name="Dimalanta E.T."/>
            <person name="Potamousis K."/>
            <person name="Apodaca J."/>
            <person name="Anantharaman T.S."/>
            <person name="Lin J."/>
            <person name="Yen G."/>
            <person name="Schwartz D.C."/>
            <person name="Welch R.A."/>
            <person name="Blattner F.R."/>
        </authorList>
    </citation>
    <scope>NUCLEOTIDE SEQUENCE [LARGE SCALE GENOMIC DNA]</scope>
    <source>
        <strain>O157:H7 / EDL933 / ATCC 700927 / EHEC</strain>
    </source>
</reference>
<reference key="2">
    <citation type="journal article" date="2001" name="DNA Res.">
        <title>Complete genome sequence of enterohemorrhagic Escherichia coli O157:H7 and genomic comparison with a laboratory strain K-12.</title>
        <authorList>
            <person name="Hayashi T."/>
            <person name="Makino K."/>
            <person name="Ohnishi M."/>
            <person name="Kurokawa K."/>
            <person name="Ishii K."/>
            <person name="Yokoyama K."/>
            <person name="Han C.-G."/>
            <person name="Ohtsubo E."/>
            <person name="Nakayama K."/>
            <person name="Murata T."/>
            <person name="Tanaka M."/>
            <person name="Tobe T."/>
            <person name="Iida T."/>
            <person name="Takami H."/>
            <person name="Honda T."/>
            <person name="Sasakawa C."/>
            <person name="Ogasawara N."/>
            <person name="Yasunaga T."/>
            <person name="Kuhara S."/>
            <person name="Shiba T."/>
            <person name="Hattori M."/>
            <person name="Shinagawa H."/>
        </authorList>
    </citation>
    <scope>NUCLEOTIDE SEQUENCE [LARGE SCALE GENOMIC DNA]</scope>
    <source>
        <strain>O157:H7 / Sakai / RIMD 0509952 / EHEC</strain>
    </source>
</reference>
<dbReference type="EMBL" id="AE005174">
    <property type="protein sequence ID" value="AAG56060.1"/>
    <property type="molecule type" value="Genomic_DNA"/>
</dbReference>
<dbReference type="EMBL" id="BA000007">
    <property type="protein sequence ID" value="BAB35130.1"/>
    <property type="molecule type" value="Genomic_DNA"/>
</dbReference>
<dbReference type="PIR" id="C90842">
    <property type="entry name" value="C90842"/>
</dbReference>
<dbReference type="PIR" id="H85699">
    <property type="entry name" value="H85699"/>
</dbReference>
<dbReference type="RefSeq" id="NP_309734.1">
    <property type="nucleotide sequence ID" value="NC_002695.1"/>
</dbReference>
<dbReference type="SMR" id="Q8X583"/>
<dbReference type="STRING" id="155864.Z1972"/>
<dbReference type="KEGG" id="ece:Z1972"/>
<dbReference type="PATRIC" id="fig|386585.9.peg.1804"/>
<dbReference type="eggNOG" id="COG3468">
    <property type="taxonomic scope" value="Bacteria"/>
</dbReference>
<dbReference type="HOGENOM" id="CLU_013182_0_0_6"/>
<dbReference type="Proteomes" id="UP000000558">
    <property type="component" value="Chromosome"/>
</dbReference>
<dbReference type="Proteomes" id="UP000002519">
    <property type="component" value="Chromosome"/>
</dbReference>
<dbReference type="Gene3D" id="2.160.20.20">
    <property type="match status" value="2"/>
</dbReference>
<dbReference type="InterPro" id="IPR012332">
    <property type="entry name" value="Autotransporter_pectin_lyase_C"/>
</dbReference>
<dbReference type="InterPro" id="IPR011050">
    <property type="entry name" value="Pectin_lyase_fold/virulence"/>
</dbReference>
<dbReference type="InterPro" id="IPR004899">
    <property type="entry name" value="Pertactin_central"/>
</dbReference>
<dbReference type="Pfam" id="PF03212">
    <property type="entry name" value="Pertactin"/>
    <property type="match status" value="1"/>
</dbReference>
<dbReference type="SUPFAM" id="SSF51126">
    <property type="entry name" value="Pectin lyase-like"/>
    <property type="match status" value="1"/>
</dbReference>
<gene>
    <name type="primary">ycgV</name>
    <name type="ordered locus">Z1972</name>
    <name type="ordered locus">ECs1707</name>
</gene>
<evidence type="ECO:0000305" key="1"/>
<keyword id="KW-1185">Reference proteome</keyword>
<organism>
    <name type="scientific">Escherichia coli O157:H7</name>
    <dbReference type="NCBI Taxonomy" id="83334"/>
    <lineage>
        <taxon>Bacteria</taxon>
        <taxon>Pseudomonadati</taxon>
        <taxon>Pseudomonadota</taxon>
        <taxon>Gammaproteobacteria</taxon>
        <taxon>Enterobacterales</taxon>
        <taxon>Enterobacteriaceae</taxon>
        <taxon>Escherichia</taxon>
    </lineage>
</organism>
<comment type="similarity">
    <text evidence="1">To B.pertussis prn N-terminal region.</text>
</comment>
<comment type="caution">
    <text evidence="1">Could be the product of a pseudogene.</text>
</comment>